<organism>
    <name type="scientific">Frankia alni (strain DSM 45986 / CECT 9034 / ACN14a)</name>
    <dbReference type="NCBI Taxonomy" id="326424"/>
    <lineage>
        <taxon>Bacteria</taxon>
        <taxon>Bacillati</taxon>
        <taxon>Actinomycetota</taxon>
        <taxon>Actinomycetes</taxon>
        <taxon>Frankiales</taxon>
        <taxon>Frankiaceae</taxon>
        <taxon>Frankia</taxon>
    </lineage>
</organism>
<feature type="chain" id="PRO_0000334301" description="Na(+)/H(+) antiporter NhaA 1">
    <location>
        <begin position="1"/>
        <end position="429"/>
    </location>
</feature>
<feature type="transmembrane region" description="Helical" evidence="1">
    <location>
        <begin position="32"/>
        <end position="52"/>
    </location>
</feature>
<feature type="transmembrane region" description="Helical" evidence="1">
    <location>
        <begin position="73"/>
        <end position="93"/>
    </location>
</feature>
<feature type="transmembrane region" description="Helical" evidence="1">
    <location>
        <begin position="111"/>
        <end position="131"/>
    </location>
</feature>
<feature type="transmembrane region" description="Helical" evidence="1">
    <location>
        <begin position="140"/>
        <end position="160"/>
    </location>
</feature>
<feature type="transmembrane region" description="Helical" evidence="1">
    <location>
        <begin position="170"/>
        <end position="190"/>
    </location>
</feature>
<feature type="transmembrane region" description="Helical" evidence="1">
    <location>
        <begin position="193"/>
        <end position="213"/>
    </location>
</feature>
<feature type="transmembrane region" description="Helical" evidence="1">
    <location>
        <begin position="219"/>
        <end position="239"/>
    </location>
</feature>
<feature type="transmembrane region" description="Helical" evidence="1">
    <location>
        <begin position="243"/>
        <end position="263"/>
    </location>
</feature>
<feature type="transmembrane region" description="Helical" evidence="1">
    <location>
        <begin position="284"/>
        <end position="304"/>
    </location>
</feature>
<feature type="transmembrane region" description="Helical" evidence="1">
    <location>
        <begin position="316"/>
        <end position="336"/>
    </location>
</feature>
<feature type="transmembrane region" description="Helical" evidence="1">
    <location>
        <begin position="349"/>
        <end position="369"/>
    </location>
</feature>
<feature type="transmembrane region" description="Helical" evidence="1">
    <location>
        <begin position="383"/>
        <end position="403"/>
    </location>
</feature>
<dbReference type="EMBL" id="CT573213">
    <property type="protein sequence ID" value="CAJ60597.1"/>
    <property type="molecule type" value="Genomic_DNA"/>
</dbReference>
<dbReference type="RefSeq" id="WP_011603121.1">
    <property type="nucleotide sequence ID" value="NC_008278.1"/>
</dbReference>
<dbReference type="SMR" id="Q0RPD5"/>
<dbReference type="STRING" id="326424.FRAAL1948"/>
<dbReference type="KEGG" id="fal:FRAAL1948"/>
<dbReference type="eggNOG" id="COG3004">
    <property type="taxonomic scope" value="Bacteria"/>
</dbReference>
<dbReference type="HOGENOM" id="CLU_015803_0_0_11"/>
<dbReference type="OrthoDB" id="117402at2"/>
<dbReference type="Proteomes" id="UP000000657">
    <property type="component" value="Chromosome"/>
</dbReference>
<dbReference type="GO" id="GO:0005886">
    <property type="term" value="C:plasma membrane"/>
    <property type="evidence" value="ECO:0007669"/>
    <property type="project" value="UniProtKB-SubCell"/>
</dbReference>
<dbReference type="GO" id="GO:0015385">
    <property type="term" value="F:sodium:proton antiporter activity"/>
    <property type="evidence" value="ECO:0007669"/>
    <property type="project" value="TreeGrafter"/>
</dbReference>
<dbReference type="GO" id="GO:0006885">
    <property type="term" value="P:regulation of pH"/>
    <property type="evidence" value="ECO:0007669"/>
    <property type="project" value="InterPro"/>
</dbReference>
<dbReference type="Gene3D" id="1.20.1530.10">
    <property type="entry name" value="Na+/H+ antiporter like domain"/>
    <property type="match status" value="1"/>
</dbReference>
<dbReference type="HAMAP" id="MF_01844">
    <property type="entry name" value="NhaA"/>
    <property type="match status" value="1"/>
</dbReference>
<dbReference type="InterPro" id="IPR023171">
    <property type="entry name" value="Na/H_antiporter_dom_sf"/>
</dbReference>
<dbReference type="InterPro" id="IPR004670">
    <property type="entry name" value="NhaA"/>
</dbReference>
<dbReference type="NCBIfam" id="TIGR00773">
    <property type="entry name" value="NhaA"/>
    <property type="match status" value="1"/>
</dbReference>
<dbReference type="PANTHER" id="PTHR30341:SF0">
    <property type="entry name" value="NA(+)_H(+) ANTIPORTER NHAA"/>
    <property type="match status" value="1"/>
</dbReference>
<dbReference type="PANTHER" id="PTHR30341">
    <property type="entry name" value="SODIUM ION/PROTON ANTIPORTER NHAA-RELATED"/>
    <property type="match status" value="1"/>
</dbReference>
<dbReference type="Pfam" id="PF06965">
    <property type="entry name" value="Na_H_antiport_1"/>
    <property type="match status" value="1"/>
</dbReference>
<keyword id="KW-0050">Antiport</keyword>
<keyword id="KW-1003">Cell membrane</keyword>
<keyword id="KW-0406">Ion transport</keyword>
<keyword id="KW-0472">Membrane</keyword>
<keyword id="KW-1185">Reference proteome</keyword>
<keyword id="KW-0915">Sodium</keyword>
<keyword id="KW-0739">Sodium transport</keyword>
<keyword id="KW-0812">Transmembrane</keyword>
<keyword id="KW-1133">Transmembrane helix</keyword>
<keyword id="KW-0813">Transport</keyword>
<comment type="function">
    <text evidence="1">Na(+)/H(+) antiporter that extrudes sodium in exchange for external protons.</text>
</comment>
<comment type="catalytic activity">
    <reaction evidence="1">
        <text>Na(+)(in) + 2 H(+)(out) = Na(+)(out) + 2 H(+)(in)</text>
        <dbReference type="Rhea" id="RHEA:29251"/>
        <dbReference type="ChEBI" id="CHEBI:15378"/>
        <dbReference type="ChEBI" id="CHEBI:29101"/>
    </reaction>
    <physiologicalReaction direction="left-to-right" evidence="1">
        <dbReference type="Rhea" id="RHEA:29252"/>
    </physiologicalReaction>
</comment>
<comment type="subcellular location">
    <subcellularLocation>
        <location evidence="1">Cell membrane</location>
        <topology evidence="1">Multi-pass membrane protein</topology>
    </subcellularLocation>
</comment>
<comment type="similarity">
    <text evidence="1">Belongs to the NhaA Na(+)/H(+) (TC 2.A.33) antiporter family.</text>
</comment>
<gene>
    <name evidence="1" type="primary">nhaA1</name>
    <name type="ordered locus">FRAAL1948</name>
</gene>
<sequence>MLNPQTRRVRLFARGSWAETRRIAGILRDETISGGLLLAATVLALGWANSPWSGTYDSLLATDFGPAALHLDLSVQQWAADGLLAIFFFVAGLELKREFVAGDLRDPSRAVVPVAAAAGGVAVPAVLYSLLNLHSGALRGWAIPTATDIAFALSVLAVVGRCLPTALRTFLLTLAVVDDLLAIVIIAVAYTGELSVVPLVAAVVPLAAFTLLVQRRVRAWWLLLPLAVLTWALVHASGVHATVAGVLLAFAVPVLRSEGAGGPQAGPGLAEHFEHRWRPLSAAVAVPVFAFCSAGVTVGGLGGLGDALSDRAALGVVVGLVVGKAIGIFTTTWLVARFTGASLERGLAWVDVAGLALLGGVGFTVSLLIGELAFGPGSARDDHVKVGVLTASVTAALLATVVLRLRNRAYARIHELETADDDHEDGPDA</sequence>
<name>NHAA1_FRAAA</name>
<protein>
    <recommendedName>
        <fullName evidence="1">Na(+)/H(+) antiporter NhaA 1</fullName>
    </recommendedName>
    <alternativeName>
        <fullName evidence="1">Sodium/proton antiporter NhaA 1</fullName>
    </alternativeName>
</protein>
<accession>Q0RPD5</accession>
<evidence type="ECO:0000255" key="1">
    <source>
        <dbReference type="HAMAP-Rule" id="MF_01844"/>
    </source>
</evidence>
<proteinExistence type="inferred from homology"/>
<reference key="1">
    <citation type="journal article" date="2007" name="Genome Res.">
        <title>Genome characteristics of facultatively symbiotic Frankia sp. strains reflect host range and host plant biogeography.</title>
        <authorList>
            <person name="Normand P."/>
            <person name="Lapierre P."/>
            <person name="Tisa L.S."/>
            <person name="Gogarten J.P."/>
            <person name="Alloisio N."/>
            <person name="Bagnarol E."/>
            <person name="Bassi C.A."/>
            <person name="Berry A.M."/>
            <person name="Bickhart D.M."/>
            <person name="Choisne N."/>
            <person name="Couloux A."/>
            <person name="Cournoyer B."/>
            <person name="Cruveiller S."/>
            <person name="Daubin V."/>
            <person name="Demange N."/>
            <person name="Francino M.P."/>
            <person name="Goltsman E."/>
            <person name="Huang Y."/>
            <person name="Kopp O.R."/>
            <person name="Labarre L."/>
            <person name="Lapidus A."/>
            <person name="Lavire C."/>
            <person name="Marechal J."/>
            <person name="Martinez M."/>
            <person name="Mastronunzio J.E."/>
            <person name="Mullin B.C."/>
            <person name="Niemann J."/>
            <person name="Pujic P."/>
            <person name="Rawnsley T."/>
            <person name="Rouy Z."/>
            <person name="Schenowitz C."/>
            <person name="Sellstedt A."/>
            <person name="Tavares F."/>
            <person name="Tomkins J.P."/>
            <person name="Vallenet D."/>
            <person name="Valverde C."/>
            <person name="Wall L.G."/>
            <person name="Wang Y."/>
            <person name="Medigue C."/>
            <person name="Benson D.R."/>
        </authorList>
    </citation>
    <scope>NUCLEOTIDE SEQUENCE [LARGE SCALE GENOMIC DNA]</scope>
    <source>
        <strain>DSM 45986 / CECT 9034 / ACN14a</strain>
    </source>
</reference>